<sequence>MVRPLNDFHEAKVRIKLSSYSASLLNLSCNNVLQSIKESNTSVKGPVFLPTRRRVYCVLRSPHVNKDSREHFEIRSHFRIIDISSCSSETIEMLMRLDLPTGVNIEIKT</sequence>
<dbReference type="EMBL" id="AF022186">
    <property type="protein sequence ID" value="AAF12935.1"/>
    <property type="molecule type" value="Genomic_DNA"/>
</dbReference>
<dbReference type="RefSeq" id="NP_045159.1">
    <property type="nucleotide sequence ID" value="NC_001840.1"/>
</dbReference>
<dbReference type="SMR" id="Q9TLV9"/>
<dbReference type="GeneID" id="800216"/>
<dbReference type="GO" id="GO:0009507">
    <property type="term" value="C:chloroplast"/>
    <property type="evidence" value="ECO:0007669"/>
    <property type="project" value="UniProtKB-SubCell"/>
</dbReference>
<dbReference type="GO" id="GO:1990904">
    <property type="term" value="C:ribonucleoprotein complex"/>
    <property type="evidence" value="ECO:0007669"/>
    <property type="project" value="UniProtKB-KW"/>
</dbReference>
<dbReference type="GO" id="GO:0005840">
    <property type="term" value="C:ribosome"/>
    <property type="evidence" value="ECO:0007669"/>
    <property type="project" value="UniProtKB-KW"/>
</dbReference>
<dbReference type="GO" id="GO:0003735">
    <property type="term" value="F:structural constituent of ribosome"/>
    <property type="evidence" value="ECO:0007669"/>
    <property type="project" value="InterPro"/>
</dbReference>
<dbReference type="GO" id="GO:0000049">
    <property type="term" value="F:tRNA binding"/>
    <property type="evidence" value="ECO:0007669"/>
    <property type="project" value="UniProtKB-UniRule"/>
</dbReference>
<dbReference type="GO" id="GO:0006412">
    <property type="term" value="P:translation"/>
    <property type="evidence" value="ECO:0007669"/>
    <property type="project" value="UniProtKB-UniRule"/>
</dbReference>
<dbReference type="FunFam" id="3.30.70.600:FF:000003">
    <property type="entry name" value="30S ribosomal protein S10"/>
    <property type="match status" value="1"/>
</dbReference>
<dbReference type="Gene3D" id="3.30.70.600">
    <property type="entry name" value="Ribosomal protein S10 domain"/>
    <property type="match status" value="1"/>
</dbReference>
<dbReference type="HAMAP" id="MF_00508">
    <property type="entry name" value="Ribosomal_uS10"/>
    <property type="match status" value="1"/>
</dbReference>
<dbReference type="InterPro" id="IPR001848">
    <property type="entry name" value="Ribosomal_uS10"/>
</dbReference>
<dbReference type="InterPro" id="IPR027486">
    <property type="entry name" value="Ribosomal_uS10_dom"/>
</dbReference>
<dbReference type="InterPro" id="IPR036838">
    <property type="entry name" value="Ribosomal_uS10_dom_sf"/>
</dbReference>
<dbReference type="NCBIfam" id="NF001861">
    <property type="entry name" value="PRK00596.1"/>
    <property type="match status" value="1"/>
</dbReference>
<dbReference type="NCBIfam" id="TIGR01049">
    <property type="entry name" value="rpsJ_bact"/>
    <property type="match status" value="1"/>
</dbReference>
<dbReference type="PANTHER" id="PTHR11700">
    <property type="entry name" value="30S RIBOSOMAL PROTEIN S10 FAMILY MEMBER"/>
    <property type="match status" value="1"/>
</dbReference>
<dbReference type="Pfam" id="PF00338">
    <property type="entry name" value="Ribosomal_S10"/>
    <property type="match status" value="1"/>
</dbReference>
<dbReference type="PRINTS" id="PR00971">
    <property type="entry name" value="RIBOSOMALS10"/>
</dbReference>
<dbReference type="SMART" id="SM01403">
    <property type="entry name" value="Ribosomal_S10"/>
    <property type="match status" value="1"/>
</dbReference>
<dbReference type="SUPFAM" id="SSF54999">
    <property type="entry name" value="Ribosomal protein S10"/>
    <property type="match status" value="1"/>
</dbReference>
<accession>Q9TLV9</accession>
<feature type="chain" id="PRO_0000146665" description="Small ribosomal subunit protein uS10c">
    <location>
        <begin position="1"/>
        <end position="109"/>
    </location>
</feature>
<protein>
    <recommendedName>
        <fullName evidence="1">Small ribosomal subunit protein uS10c</fullName>
    </recommendedName>
    <alternativeName>
        <fullName evidence="2">30S ribosomal protein S10, chloroplastic</fullName>
    </alternativeName>
</protein>
<evidence type="ECO:0000255" key="1">
    <source>
        <dbReference type="HAMAP-Rule" id="MF_00508"/>
    </source>
</evidence>
<evidence type="ECO:0000305" key="2"/>
<organism>
    <name type="scientific">Cyanidium caldarium</name>
    <name type="common">Red alga</name>
    <dbReference type="NCBI Taxonomy" id="2771"/>
    <lineage>
        <taxon>Eukaryota</taxon>
        <taxon>Rhodophyta</taxon>
        <taxon>Bangiophyceae</taxon>
        <taxon>Cyanidiales</taxon>
        <taxon>Cyanidiaceae</taxon>
        <taxon>Cyanidium</taxon>
    </lineage>
</organism>
<gene>
    <name evidence="1" type="primary">rps10</name>
</gene>
<keyword id="KW-0150">Chloroplast</keyword>
<keyword id="KW-0934">Plastid</keyword>
<keyword id="KW-0687">Ribonucleoprotein</keyword>
<keyword id="KW-0689">Ribosomal protein</keyword>
<reference key="1">
    <citation type="journal article" date="2000" name="J. Mol. Evol.">
        <title>The structure and gene repertoire of an ancient red algal plastid genome.</title>
        <authorList>
            <person name="Gloeckner G."/>
            <person name="Rosenthal A."/>
            <person name="Valentin K.-U."/>
        </authorList>
    </citation>
    <scope>NUCLEOTIDE SEQUENCE [LARGE SCALE GENOMIC DNA]</scope>
    <source>
        <strain>RK-1</strain>
    </source>
</reference>
<proteinExistence type="inferred from homology"/>
<name>RR10_CYACA</name>
<geneLocation type="chloroplast"/>
<comment type="function">
    <text evidence="1">Involved in the binding of tRNA to the ribosomes.</text>
</comment>
<comment type="subunit">
    <text evidence="1">Part of the 30S ribosomal subunit.</text>
</comment>
<comment type="subcellular location">
    <subcellularLocation>
        <location evidence="1">Plastid</location>
        <location evidence="1">Chloroplast</location>
    </subcellularLocation>
</comment>
<comment type="similarity">
    <text evidence="1">Belongs to the universal ribosomal protein uS10 family.</text>
</comment>